<evidence type="ECO:0000250" key="1">
    <source>
        <dbReference type="UniProtKB" id="P28221"/>
    </source>
</evidence>
<evidence type="ECO:0000250" key="2">
    <source>
        <dbReference type="UniProtKB" id="P41595"/>
    </source>
</evidence>
<evidence type="ECO:0000255" key="3"/>
<evidence type="ECO:0000255" key="4">
    <source>
        <dbReference type="PROSITE-ProRule" id="PRU00521"/>
    </source>
</evidence>
<evidence type="ECO:0000269" key="5">
    <source>
    </source>
</evidence>
<evidence type="ECO:0000269" key="6">
    <source>
    </source>
</evidence>
<name>5HT1D_CANLF</name>
<reference key="1">
    <citation type="journal article" date="1989" name="Science">
        <title>Selective amplification and cloning of four new members of the G protein-coupled receptor family.</title>
        <authorList>
            <person name="Libert F."/>
            <person name="Parmentier M."/>
            <person name="Lefort A."/>
            <person name="Dinsart C."/>
            <person name="van Sande J."/>
            <person name="Maenhaut C."/>
            <person name="Simons M.-J."/>
            <person name="Dumont J.E."/>
            <person name="Vassart G."/>
        </authorList>
    </citation>
    <scope>NUCLEOTIDE SEQUENCE [MRNA]</scope>
    <source>
        <tissue>Thyroid</tissue>
    </source>
</reference>
<reference key="2">
    <citation type="journal article" date="1990" name="Nucleic Acids Res.">
        <title>Complete nucleotide sequence of a putative G protein coupled receptor: RDC4.</title>
        <authorList>
            <person name="Libert F."/>
            <person name="Parmentier M."/>
            <person name="Lefort A."/>
            <person name="Dumont J.E."/>
            <person name="Vassart G."/>
        </authorList>
    </citation>
    <scope>NUCLEOTIDE SEQUENCE [MRNA]</scope>
    <source>
        <tissue>Thyroid</tissue>
    </source>
</reference>
<reference key="3">
    <citation type="journal article" date="1991" name="Biochem. Biophys. Res. Commun.">
        <title>The orphan receptor cDNA RDC4 encodes a 5-HT1D serotonin receptor.</title>
        <authorList>
            <person name="Maenhaut C."/>
            <person name="van Sande J."/>
            <person name="Massart C."/>
            <person name="Dinsart C."/>
            <person name="Libert F."/>
            <person name="Monferini E."/>
            <person name="Giraldo E."/>
            <person name="Ladinsky H."/>
            <person name="Vassart G."/>
            <person name="Dumont J.E."/>
        </authorList>
    </citation>
    <scope>FUNCTION</scope>
</reference>
<reference key="4">
    <citation type="journal article" date="1991" name="Mol. Pharmacol.">
        <title>Expression and pharmacological characterization of a canine 5-hydroxytryptamine1D receptor subtype.</title>
        <authorList>
            <person name="Zgombick J.M."/>
            <person name="Weinshank R.L."/>
            <person name="Macchi M."/>
            <person name="Schechter L.E."/>
            <person name="Branchek T.A."/>
            <person name="Hartig P.R."/>
        </authorList>
    </citation>
    <scope>FUNCTION</scope>
</reference>
<gene>
    <name type="primary">HTR1D</name>
    <name type="synonym">RDC4</name>
</gene>
<proteinExistence type="evidence at transcript level"/>
<protein>
    <recommendedName>
        <fullName>5-hydroxytryptamine receptor 1D</fullName>
        <shortName>5-HT-1D</shortName>
        <shortName>5-HT1D</shortName>
    </recommendedName>
    <alternativeName>
        <fullName>Serotonin receptor 1D</fullName>
    </alternativeName>
</protein>
<organism>
    <name type="scientific">Canis lupus familiaris</name>
    <name type="common">Dog</name>
    <name type="synonym">Canis familiaris</name>
    <dbReference type="NCBI Taxonomy" id="9615"/>
    <lineage>
        <taxon>Eukaryota</taxon>
        <taxon>Metazoa</taxon>
        <taxon>Chordata</taxon>
        <taxon>Craniata</taxon>
        <taxon>Vertebrata</taxon>
        <taxon>Euteleostomi</taxon>
        <taxon>Mammalia</taxon>
        <taxon>Eutheria</taxon>
        <taxon>Laurasiatheria</taxon>
        <taxon>Carnivora</taxon>
        <taxon>Caniformia</taxon>
        <taxon>Canidae</taxon>
        <taxon>Canis</taxon>
    </lineage>
</organism>
<keyword id="KW-1003">Cell membrane</keyword>
<keyword id="KW-1015">Disulfide bond</keyword>
<keyword id="KW-0297">G-protein coupled receptor</keyword>
<keyword id="KW-0325">Glycoprotein</keyword>
<keyword id="KW-0472">Membrane</keyword>
<keyword id="KW-0675">Receptor</keyword>
<keyword id="KW-1185">Reference proteome</keyword>
<keyword id="KW-0807">Transducer</keyword>
<keyword id="KW-0812">Transmembrane</keyword>
<keyword id="KW-1133">Transmembrane helix</keyword>
<sequence length="377" mass="41883">MSPPNQSLEGLLQEASNRSLNATETPEAWGPETLQALKISLALLLSIITMATALSNAFVLTTIFLTRKLHTPANYLIGSLAMTDLLVSILVMPISIAYTTTRTWSFGQILCDIWLSSDITCCTASILHLCVIALDRYWAITDALEYSKRRTAGRAAVMIATVWVISICISIPPLFWRQAKAQEDMSDCQVNTSQISYTIYSTCGAFYIPSVLLIILYGRIYVAARNRILNPPSLYGKRFTTAQLITGSAGSSLCSLSPSLQEERSHAAGPPLFFNHVQVKLAEGVLERKRISAARERKATKTLGIILGAFIVCWLPFFVASLVLPICRASCWLHPALFDFFTWLGYLNSLINPIIYTVFNEEFRQAFQRVVHVRKAS</sequence>
<dbReference type="EMBL" id="X14049">
    <property type="protein sequence ID" value="CAA32207.1"/>
    <property type="molecule type" value="mRNA"/>
</dbReference>
<dbReference type="PIR" id="B30341">
    <property type="entry name" value="B30341"/>
</dbReference>
<dbReference type="RefSeq" id="NP_001003280.1">
    <property type="nucleotide sequence ID" value="NM_001003280.1"/>
</dbReference>
<dbReference type="SMR" id="P11614"/>
<dbReference type="FunCoup" id="P11614">
    <property type="interactions" value="205"/>
</dbReference>
<dbReference type="BindingDB" id="P11614"/>
<dbReference type="GlyCosmos" id="P11614">
    <property type="glycosylation" value="3 sites, No reported glycans"/>
</dbReference>
<dbReference type="PaxDb" id="9612-ENSCAFP00000019638"/>
<dbReference type="GeneID" id="403963"/>
<dbReference type="KEGG" id="cfa:403963"/>
<dbReference type="CTD" id="3352"/>
<dbReference type="eggNOG" id="KOG3656">
    <property type="taxonomic scope" value="Eukaryota"/>
</dbReference>
<dbReference type="InParanoid" id="P11614"/>
<dbReference type="OrthoDB" id="5956310at2759"/>
<dbReference type="Proteomes" id="UP000002254">
    <property type="component" value="Unplaced"/>
</dbReference>
<dbReference type="Proteomes" id="UP000694429">
    <property type="component" value="Unplaced"/>
</dbReference>
<dbReference type="Proteomes" id="UP000694542">
    <property type="component" value="Unplaced"/>
</dbReference>
<dbReference type="Proteomes" id="UP000805418">
    <property type="component" value="Unplaced"/>
</dbReference>
<dbReference type="GO" id="GO:0030425">
    <property type="term" value="C:dendrite"/>
    <property type="evidence" value="ECO:0000318"/>
    <property type="project" value="GO_Central"/>
</dbReference>
<dbReference type="GO" id="GO:0005886">
    <property type="term" value="C:plasma membrane"/>
    <property type="evidence" value="ECO:0000250"/>
    <property type="project" value="UniProtKB"/>
</dbReference>
<dbReference type="GO" id="GO:0045202">
    <property type="term" value="C:synapse"/>
    <property type="evidence" value="ECO:0007669"/>
    <property type="project" value="GOC"/>
</dbReference>
<dbReference type="GO" id="GO:0004993">
    <property type="term" value="F:G protein-coupled serotonin receptor activity"/>
    <property type="evidence" value="ECO:0000250"/>
    <property type="project" value="UniProtKB"/>
</dbReference>
<dbReference type="GO" id="GO:0030594">
    <property type="term" value="F:neurotransmitter receptor activity"/>
    <property type="evidence" value="ECO:0000318"/>
    <property type="project" value="GO_Central"/>
</dbReference>
<dbReference type="GO" id="GO:0007193">
    <property type="term" value="P:adenylate cyclase-inhibiting G protein-coupled receptor signaling pathway"/>
    <property type="evidence" value="ECO:0000250"/>
    <property type="project" value="UniProtKB"/>
</dbReference>
<dbReference type="GO" id="GO:0007198">
    <property type="term" value="P:adenylate cyclase-inhibiting serotonin receptor signaling pathway"/>
    <property type="evidence" value="ECO:0000318"/>
    <property type="project" value="GO_Central"/>
</dbReference>
<dbReference type="GO" id="GO:0007268">
    <property type="term" value="P:chemical synaptic transmission"/>
    <property type="evidence" value="ECO:0000318"/>
    <property type="project" value="GO_Central"/>
</dbReference>
<dbReference type="GO" id="GO:0007187">
    <property type="term" value="P:G protein-coupled receptor signaling pathway, coupled to cyclic nucleotide second messenger"/>
    <property type="evidence" value="ECO:0000318"/>
    <property type="project" value="GO_Central"/>
</dbReference>
<dbReference type="GO" id="GO:0050795">
    <property type="term" value="P:regulation of behavior"/>
    <property type="evidence" value="ECO:0007669"/>
    <property type="project" value="InterPro"/>
</dbReference>
<dbReference type="GO" id="GO:0040012">
    <property type="term" value="P:regulation of locomotion"/>
    <property type="evidence" value="ECO:0007669"/>
    <property type="project" value="InterPro"/>
</dbReference>
<dbReference type="GO" id="GO:0006939">
    <property type="term" value="P:smooth muscle contraction"/>
    <property type="evidence" value="ECO:0007669"/>
    <property type="project" value="InterPro"/>
</dbReference>
<dbReference type="GO" id="GO:0042310">
    <property type="term" value="P:vasoconstriction"/>
    <property type="evidence" value="ECO:0007669"/>
    <property type="project" value="InterPro"/>
</dbReference>
<dbReference type="CDD" id="cd15333">
    <property type="entry name" value="7tmA_5-HT1B_1D"/>
    <property type="match status" value="1"/>
</dbReference>
<dbReference type="Gene3D" id="1.20.1070.10">
    <property type="entry name" value="Rhodopsin 7-helix transmembrane proteins"/>
    <property type="match status" value="1"/>
</dbReference>
<dbReference type="InterPro" id="IPR000505">
    <property type="entry name" value="5HT1D_rcpt"/>
</dbReference>
<dbReference type="InterPro" id="IPR002231">
    <property type="entry name" value="5HT_rcpt"/>
</dbReference>
<dbReference type="InterPro" id="IPR000276">
    <property type="entry name" value="GPCR_Rhodpsn"/>
</dbReference>
<dbReference type="InterPro" id="IPR017452">
    <property type="entry name" value="GPCR_Rhodpsn_7TM"/>
</dbReference>
<dbReference type="PANTHER" id="PTHR24248:SF196">
    <property type="entry name" value="5-HYDROXYTRYPTAMINE RECEPTOR 1D"/>
    <property type="match status" value="1"/>
</dbReference>
<dbReference type="PANTHER" id="PTHR24248">
    <property type="entry name" value="ADRENERGIC RECEPTOR-RELATED G-PROTEIN COUPLED RECEPTOR"/>
    <property type="match status" value="1"/>
</dbReference>
<dbReference type="Pfam" id="PF00001">
    <property type="entry name" value="7tm_1"/>
    <property type="match status" value="1"/>
</dbReference>
<dbReference type="PRINTS" id="PR00514">
    <property type="entry name" value="5HT1DRECEPTR"/>
</dbReference>
<dbReference type="PRINTS" id="PR01101">
    <property type="entry name" value="5HTRECEPTOR"/>
</dbReference>
<dbReference type="PRINTS" id="PR00237">
    <property type="entry name" value="GPCRRHODOPSN"/>
</dbReference>
<dbReference type="SMART" id="SM01381">
    <property type="entry name" value="7TM_GPCR_Srsx"/>
    <property type="match status" value="1"/>
</dbReference>
<dbReference type="SUPFAM" id="SSF81321">
    <property type="entry name" value="Family A G protein-coupled receptor-like"/>
    <property type="match status" value="1"/>
</dbReference>
<dbReference type="PROSITE" id="PS00237">
    <property type="entry name" value="G_PROTEIN_RECEP_F1_1"/>
    <property type="match status" value="1"/>
</dbReference>
<dbReference type="PROSITE" id="PS50262">
    <property type="entry name" value="G_PROTEIN_RECEP_F1_2"/>
    <property type="match status" value="1"/>
</dbReference>
<comment type="function">
    <text evidence="1 5 6">G-protein coupled receptor for 5-hydroxytryptamine (serotonin) (PubMed:1659418, PubMed:1758439). Also functions as a receptor for ergot alkaloid derivatives, various anxiolytic and antidepressant drugs and other psychoactive substances (By similarity). Ligand binding causes a conformation change that triggers signaling via guanine nucleotide-binding proteins (G proteins) and modulates the activity of downstream effectors, such as adenylate cyclase (By similarity). HTR1D is coupled to G(i)/G(o) G alpha proteins and mediates inhibitory neurotransmission by inhibiting adenylate cyclase activity (By similarity). Regulates the release of 5-hydroxytryptamine in the brain, and thereby affects neural activity (By similarity). May also play a role in regulating the release of other neurotransmitters (By similarity). May play a role in vasoconstriction (By similarity).</text>
</comment>
<comment type="subunit">
    <text evidence="1">Homodimer. Heterodimer with HTR1B.</text>
</comment>
<comment type="subcellular location">
    <subcellularLocation>
        <location evidence="1">Cell membrane</location>
        <topology evidence="1">Multi-pass membrane protein</topology>
    </subcellularLocation>
</comment>
<comment type="similarity">
    <text evidence="4">Belongs to the G-protein coupled receptor 1 family.</text>
</comment>
<accession>P11614</accession>
<feature type="chain" id="PRO_0000068925" description="5-hydroxytryptamine receptor 1D">
    <location>
        <begin position="1"/>
        <end position="377"/>
    </location>
</feature>
<feature type="transmembrane region" description="Helical; Name=1" evidence="1">
    <location>
        <begin position="39"/>
        <end position="64"/>
    </location>
</feature>
<feature type="transmembrane region" description="Helical; Name=2" evidence="1">
    <location>
        <begin position="76"/>
        <end position="97"/>
    </location>
</feature>
<feature type="transmembrane region" description="Helical; Name=3" evidence="1">
    <location>
        <begin position="110"/>
        <end position="134"/>
    </location>
</feature>
<feature type="transmembrane region" description="Helical; Name=4" evidence="1">
    <location>
        <begin position="155"/>
        <end position="176"/>
    </location>
</feature>
<feature type="transmembrane region" description="Helical; Name=5" evidence="1">
    <location>
        <begin position="195"/>
        <end position="218"/>
    </location>
</feature>
<feature type="transmembrane region" description="Helical; Name=6" evidence="1">
    <location>
        <begin position="301"/>
        <end position="326"/>
    </location>
</feature>
<feature type="transmembrane region" description="Helical; Name=7" evidence="1">
    <location>
        <begin position="336"/>
        <end position="359"/>
    </location>
</feature>
<feature type="short sequence motif" description="DRY motif; important for ligand-induced conformation changes" evidence="2">
    <location>
        <begin position="135"/>
        <end position="137"/>
    </location>
</feature>
<feature type="short sequence motif" description="NPxxY motif; important for ligand-induced conformation changes and signaling" evidence="2">
    <location>
        <begin position="352"/>
        <end position="356"/>
    </location>
</feature>
<feature type="binding site" evidence="1">
    <location>
        <position position="118"/>
    </location>
    <ligand>
        <name>serotonin</name>
        <dbReference type="ChEBI" id="CHEBI:350546"/>
    </ligand>
</feature>
<feature type="binding site" evidence="1">
    <location>
        <position position="122"/>
    </location>
    <ligand>
        <name>serotonin</name>
        <dbReference type="ChEBI" id="CHEBI:350546"/>
    </ligand>
</feature>
<feature type="binding site" evidence="1">
    <location>
        <position position="321"/>
    </location>
    <ligand>
        <name>serotonin</name>
        <dbReference type="ChEBI" id="CHEBI:350546"/>
    </ligand>
</feature>
<feature type="glycosylation site" description="N-linked (GlcNAc...) asparagine" evidence="3">
    <location>
        <position position="5"/>
    </location>
</feature>
<feature type="glycosylation site" description="N-linked (GlcNAc...) asparagine" evidence="3">
    <location>
        <position position="17"/>
    </location>
</feature>
<feature type="glycosylation site" description="N-linked (GlcNAc...) asparagine" evidence="3">
    <location>
        <position position="21"/>
    </location>
</feature>
<feature type="disulfide bond" evidence="4">
    <location>
        <begin position="111"/>
        <end position="188"/>
    </location>
</feature>